<keyword id="KW-0997">Cell inner membrane</keyword>
<keyword id="KW-1003">Cell membrane</keyword>
<keyword id="KW-0472">Membrane</keyword>
<keyword id="KW-1185">Reference proteome</keyword>
<keyword id="KW-0812">Transmembrane</keyword>
<keyword id="KW-1133">Transmembrane helix</keyword>
<reference key="1">
    <citation type="journal article" date="2002" name="J. Bacteriol.">
        <title>Whole-genome comparison of Mycobacterium tuberculosis clinical and laboratory strains.</title>
        <authorList>
            <person name="Fleischmann R.D."/>
            <person name="Alland D."/>
            <person name="Eisen J.A."/>
            <person name="Carpenter L."/>
            <person name="White O."/>
            <person name="Peterson J.D."/>
            <person name="DeBoy R.T."/>
            <person name="Dodson R.J."/>
            <person name="Gwinn M.L."/>
            <person name="Haft D.H."/>
            <person name="Hickey E.K."/>
            <person name="Kolonay J.F."/>
            <person name="Nelson W.C."/>
            <person name="Umayam L.A."/>
            <person name="Ermolaeva M.D."/>
            <person name="Salzberg S.L."/>
            <person name="Delcher A."/>
            <person name="Utterback T.R."/>
            <person name="Weidman J.F."/>
            <person name="Khouri H.M."/>
            <person name="Gill J."/>
            <person name="Mikula A."/>
            <person name="Bishai W."/>
            <person name="Jacobs W.R. Jr."/>
            <person name="Venter J.C."/>
            <person name="Fraser C.M."/>
        </authorList>
    </citation>
    <scope>NUCLEOTIDE SEQUENCE [LARGE SCALE GENOMIC DNA]</scope>
    <source>
        <strain>CDC 1551 / Oshkosh</strain>
    </source>
</reference>
<accession>P9WJS6</accession>
<accession>L0T4E2</accession>
<accession>O53785</accession>
<accession>P65380</accession>
<sequence>MIGTLKRAWIPLLILVVVAIAGFTVQRIRTFFGSEGILVTPKVFADDPEPFDPKVVEYEVSGSGSYVNINYLDLDAKPQRIDGAALPWSLTLKTTAPSAAPNILAQGDGTSITCRITVDGEVKDERTATGVDALTYCFVKSA</sequence>
<protein>
    <recommendedName>
        <fullName evidence="1">Siderophore export accessory protein MmpS5</fullName>
    </recommendedName>
</protein>
<comment type="function">
    <text evidence="1">Part of an export system, which is required for biosynthesis and secretion of siderophores.</text>
</comment>
<comment type="subunit">
    <text evidence="1">Interacts with MmpL5.</text>
</comment>
<comment type="subcellular location">
    <subcellularLocation>
        <location evidence="1">Cell inner membrane</location>
        <topology evidence="2">Single-pass membrane protein</topology>
    </subcellularLocation>
</comment>
<comment type="similarity">
    <text evidence="3">Belongs to the MmpS family.</text>
</comment>
<dbReference type="EMBL" id="AE000516">
    <property type="protein sequence ID" value="AAK44931.1"/>
    <property type="molecule type" value="Genomic_DNA"/>
</dbReference>
<dbReference type="PIR" id="F70826">
    <property type="entry name" value="F70826"/>
</dbReference>
<dbReference type="RefSeq" id="WP_003403439.1">
    <property type="nucleotide sequence ID" value="NZ_KK341227.1"/>
</dbReference>
<dbReference type="SMR" id="P9WJS6"/>
<dbReference type="GeneID" id="45424639"/>
<dbReference type="KEGG" id="mtc:MT0706"/>
<dbReference type="PATRIC" id="fig|83331.31.peg.752"/>
<dbReference type="HOGENOM" id="CLU_119497_0_0_11"/>
<dbReference type="Proteomes" id="UP000001020">
    <property type="component" value="Chromosome"/>
</dbReference>
<dbReference type="GO" id="GO:0005886">
    <property type="term" value="C:plasma membrane"/>
    <property type="evidence" value="ECO:0007669"/>
    <property type="project" value="UniProtKB-SubCell"/>
</dbReference>
<dbReference type="Gene3D" id="2.60.40.2880">
    <property type="entry name" value="MmpS1-5, C-terminal soluble domain"/>
    <property type="match status" value="1"/>
</dbReference>
<dbReference type="InterPro" id="IPR008693">
    <property type="entry name" value="MmpS"/>
</dbReference>
<dbReference type="InterPro" id="IPR038468">
    <property type="entry name" value="MmpS_C"/>
</dbReference>
<dbReference type="Pfam" id="PF05423">
    <property type="entry name" value="Mycobact_memb"/>
    <property type="match status" value="1"/>
</dbReference>
<evidence type="ECO:0000250" key="1">
    <source>
        <dbReference type="UniProtKB" id="P9WJS7"/>
    </source>
</evidence>
<evidence type="ECO:0000255" key="2"/>
<evidence type="ECO:0000305" key="3"/>
<organism>
    <name type="scientific">Mycobacterium tuberculosis (strain CDC 1551 / Oshkosh)</name>
    <dbReference type="NCBI Taxonomy" id="83331"/>
    <lineage>
        <taxon>Bacteria</taxon>
        <taxon>Bacillati</taxon>
        <taxon>Actinomycetota</taxon>
        <taxon>Actinomycetes</taxon>
        <taxon>Mycobacteriales</taxon>
        <taxon>Mycobacteriaceae</taxon>
        <taxon>Mycobacterium</taxon>
        <taxon>Mycobacterium tuberculosis complex</taxon>
    </lineage>
</organism>
<gene>
    <name type="primary">mmpS5</name>
    <name type="ordered locus">MT0706</name>
</gene>
<name>MMPS5_MYCTO</name>
<proteinExistence type="inferred from homology"/>
<feature type="chain" id="PRO_0000427778" description="Siderophore export accessory protein MmpS5">
    <location>
        <begin position="1"/>
        <end position="142"/>
    </location>
</feature>
<feature type="transmembrane region" description="Helical" evidence="2">
    <location>
        <begin position="7"/>
        <end position="26"/>
    </location>
</feature>